<accession>B1LEI8</accession>
<protein>
    <recommendedName>
        <fullName evidence="1">Phosphopentomutase</fullName>
        <ecNumber evidence="1">5.4.2.7</ecNumber>
    </recommendedName>
    <alternativeName>
        <fullName evidence="1">Phosphodeoxyribomutase</fullName>
    </alternativeName>
</protein>
<evidence type="ECO:0000255" key="1">
    <source>
        <dbReference type="HAMAP-Rule" id="MF_00740"/>
    </source>
</evidence>
<keyword id="KW-0963">Cytoplasm</keyword>
<keyword id="KW-0413">Isomerase</keyword>
<keyword id="KW-0464">Manganese</keyword>
<keyword id="KW-0479">Metal-binding</keyword>
<dbReference type="EC" id="5.4.2.7" evidence="1"/>
<dbReference type="EMBL" id="CP000970">
    <property type="protein sequence ID" value="ACB18369.1"/>
    <property type="molecule type" value="Genomic_DNA"/>
</dbReference>
<dbReference type="RefSeq" id="WP_000816471.1">
    <property type="nucleotide sequence ID" value="NC_010498.1"/>
</dbReference>
<dbReference type="SMR" id="B1LEI8"/>
<dbReference type="GeneID" id="89519362"/>
<dbReference type="KEGG" id="ecm:EcSMS35_4932"/>
<dbReference type="HOGENOM" id="CLU_053861_0_0_6"/>
<dbReference type="UniPathway" id="UPA00002">
    <property type="reaction ID" value="UER00467"/>
</dbReference>
<dbReference type="Proteomes" id="UP000007011">
    <property type="component" value="Chromosome"/>
</dbReference>
<dbReference type="GO" id="GO:0005829">
    <property type="term" value="C:cytosol"/>
    <property type="evidence" value="ECO:0007669"/>
    <property type="project" value="TreeGrafter"/>
</dbReference>
<dbReference type="GO" id="GO:0000287">
    <property type="term" value="F:magnesium ion binding"/>
    <property type="evidence" value="ECO:0007669"/>
    <property type="project" value="InterPro"/>
</dbReference>
<dbReference type="GO" id="GO:0030145">
    <property type="term" value="F:manganese ion binding"/>
    <property type="evidence" value="ECO:0007669"/>
    <property type="project" value="UniProtKB-UniRule"/>
</dbReference>
<dbReference type="GO" id="GO:0008973">
    <property type="term" value="F:phosphopentomutase activity"/>
    <property type="evidence" value="ECO:0007669"/>
    <property type="project" value="UniProtKB-UniRule"/>
</dbReference>
<dbReference type="GO" id="GO:0006018">
    <property type="term" value="P:2-deoxyribose 1-phosphate catabolic process"/>
    <property type="evidence" value="ECO:0007669"/>
    <property type="project" value="UniProtKB-UniRule"/>
</dbReference>
<dbReference type="GO" id="GO:0006015">
    <property type="term" value="P:5-phosphoribose 1-diphosphate biosynthetic process"/>
    <property type="evidence" value="ECO:0007669"/>
    <property type="project" value="UniProtKB-UniPathway"/>
</dbReference>
<dbReference type="GO" id="GO:0043094">
    <property type="term" value="P:metabolic compound salvage"/>
    <property type="evidence" value="ECO:0007669"/>
    <property type="project" value="InterPro"/>
</dbReference>
<dbReference type="GO" id="GO:0009117">
    <property type="term" value="P:nucleotide metabolic process"/>
    <property type="evidence" value="ECO:0007669"/>
    <property type="project" value="InterPro"/>
</dbReference>
<dbReference type="CDD" id="cd16009">
    <property type="entry name" value="PPM"/>
    <property type="match status" value="1"/>
</dbReference>
<dbReference type="FunFam" id="3.30.70.1250:FF:000001">
    <property type="entry name" value="Phosphopentomutase"/>
    <property type="match status" value="1"/>
</dbReference>
<dbReference type="Gene3D" id="3.40.720.10">
    <property type="entry name" value="Alkaline Phosphatase, subunit A"/>
    <property type="match status" value="1"/>
</dbReference>
<dbReference type="Gene3D" id="3.30.70.1250">
    <property type="entry name" value="Phosphopentomutase"/>
    <property type="match status" value="1"/>
</dbReference>
<dbReference type="HAMAP" id="MF_00740">
    <property type="entry name" value="Phosphopentomut"/>
    <property type="match status" value="1"/>
</dbReference>
<dbReference type="InterPro" id="IPR017850">
    <property type="entry name" value="Alkaline_phosphatase_core_sf"/>
</dbReference>
<dbReference type="InterPro" id="IPR010045">
    <property type="entry name" value="DeoB"/>
</dbReference>
<dbReference type="InterPro" id="IPR006124">
    <property type="entry name" value="Metalloenzyme"/>
</dbReference>
<dbReference type="InterPro" id="IPR024052">
    <property type="entry name" value="Phosphopentomutase_DeoB_cap_sf"/>
</dbReference>
<dbReference type="NCBIfam" id="TIGR01696">
    <property type="entry name" value="deoB"/>
    <property type="match status" value="1"/>
</dbReference>
<dbReference type="NCBIfam" id="NF003766">
    <property type="entry name" value="PRK05362.1"/>
    <property type="match status" value="1"/>
</dbReference>
<dbReference type="PANTHER" id="PTHR21110">
    <property type="entry name" value="PHOSPHOPENTOMUTASE"/>
    <property type="match status" value="1"/>
</dbReference>
<dbReference type="PANTHER" id="PTHR21110:SF0">
    <property type="entry name" value="PHOSPHOPENTOMUTASE"/>
    <property type="match status" value="1"/>
</dbReference>
<dbReference type="Pfam" id="PF01676">
    <property type="entry name" value="Metalloenzyme"/>
    <property type="match status" value="1"/>
</dbReference>
<dbReference type="PIRSF" id="PIRSF001491">
    <property type="entry name" value="Ppentomutase"/>
    <property type="match status" value="1"/>
</dbReference>
<dbReference type="SUPFAM" id="SSF53649">
    <property type="entry name" value="Alkaline phosphatase-like"/>
    <property type="match status" value="1"/>
</dbReference>
<dbReference type="SUPFAM" id="SSF143856">
    <property type="entry name" value="DeoB insert domain-like"/>
    <property type="match status" value="1"/>
</dbReference>
<comment type="function">
    <text evidence="1">Isomerase that catalyzes the conversion of deoxy-ribose 1-phosphate (dRib-1-P) and ribose 1-phosphate (Rib-1-P) to deoxy-ribose 5-phosphate (dRib-5-P) and ribose 5-phosphate (Rib-5-P), respectively.</text>
</comment>
<comment type="catalytic activity">
    <reaction evidence="1">
        <text>2-deoxy-alpha-D-ribose 1-phosphate = 2-deoxy-D-ribose 5-phosphate</text>
        <dbReference type="Rhea" id="RHEA:27658"/>
        <dbReference type="ChEBI" id="CHEBI:57259"/>
        <dbReference type="ChEBI" id="CHEBI:62877"/>
        <dbReference type="EC" id="5.4.2.7"/>
    </reaction>
</comment>
<comment type="catalytic activity">
    <reaction evidence="1">
        <text>alpha-D-ribose 1-phosphate = D-ribose 5-phosphate</text>
        <dbReference type="Rhea" id="RHEA:18793"/>
        <dbReference type="ChEBI" id="CHEBI:57720"/>
        <dbReference type="ChEBI" id="CHEBI:78346"/>
        <dbReference type="EC" id="5.4.2.7"/>
    </reaction>
</comment>
<comment type="cofactor">
    <cofactor evidence="1">
        <name>Mn(2+)</name>
        <dbReference type="ChEBI" id="CHEBI:29035"/>
    </cofactor>
    <text evidence="1">Binds 2 manganese ions.</text>
</comment>
<comment type="pathway">
    <text evidence="1">Carbohydrate degradation; 2-deoxy-D-ribose 1-phosphate degradation; D-glyceraldehyde 3-phosphate and acetaldehyde from 2-deoxy-alpha-D-ribose 1-phosphate: step 1/2.</text>
</comment>
<comment type="subcellular location">
    <subcellularLocation>
        <location evidence="1">Cytoplasm</location>
    </subcellularLocation>
</comment>
<comment type="similarity">
    <text evidence="1">Belongs to the phosphopentomutase family.</text>
</comment>
<reference key="1">
    <citation type="journal article" date="2008" name="J. Bacteriol.">
        <title>Insights into the environmental resistance gene pool from the genome sequence of the multidrug-resistant environmental isolate Escherichia coli SMS-3-5.</title>
        <authorList>
            <person name="Fricke W.F."/>
            <person name="Wright M.S."/>
            <person name="Lindell A.H."/>
            <person name="Harkins D.M."/>
            <person name="Baker-Austin C."/>
            <person name="Ravel J."/>
            <person name="Stepanauskas R."/>
        </authorList>
    </citation>
    <scope>NUCLEOTIDE SEQUENCE [LARGE SCALE GENOMIC DNA]</scope>
    <source>
        <strain>SMS-3-5 / SECEC</strain>
    </source>
</reference>
<sequence length="407" mass="44370">MKRAFIMVLDSFGIGATEDAERFGDVGADTLGHIAEACAKGEADNGRKGPLNLPNLTRLGLAKAHEGSTGFIPAGMDGNAEVIGAYAWAHEMSSGKDTPSGHWEIAGVPVLFEWGYFSDHENSFPQELLDKLVERANLPGYLGNCHSSGTVILDQLGEEHMKTGKPIFYTSADSVFQIACHEETFGLDKLYELCEIAREELTNGGYNIGRVIARPFIGDKAGNFQRTGNRHDLAVEPPAPTVLQKLVDEKHGQVVSVGKIADIYANCGITKKVKATGLDALFDATIKEMKEAGDNTIVFTNFVDFDSSWGHRRDVAGYAAGLELFDRRLPELMSLLRDDDILILTADHGCDPTWTGTDHTREHIPVLVYGPKVKPGSLGHRETFADIGQTLAKYFGTSDMEYGKAMF</sequence>
<name>DEOB_ECOSM</name>
<proteinExistence type="inferred from homology"/>
<gene>
    <name evidence="1" type="primary">deoB</name>
    <name type="ordered locus">EcSMS35_4932</name>
</gene>
<organism>
    <name type="scientific">Escherichia coli (strain SMS-3-5 / SECEC)</name>
    <dbReference type="NCBI Taxonomy" id="439855"/>
    <lineage>
        <taxon>Bacteria</taxon>
        <taxon>Pseudomonadati</taxon>
        <taxon>Pseudomonadota</taxon>
        <taxon>Gammaproteobacteria</taxon>
        <taxon>Enterobacterales</taxon>
        <taxon>Enterobacteriaceae</taxon>
        <taxon>Escherichia</taxon>
    </lineage>
</organism>
<feature type="chain" id="PRO_1000133075" description="Phosphopentomutase">
    <location>
        <begin position="1"/>
        <end position="407"/>
    </location>
</feature>
<feature type="binding site" evidence="1">
    <location>
        <position position="10"/>
    </location>
    <ligand>
        <name>Mn(2+)</name>
        <dbReference type="ChEBI" id="CHEBI:29035"/>
        <label>1</label>
    </ligand>
</feature>
<feature type="binding site" evidence="1">
    <location>
        <position position="306"/>
    </location>
    <ligand>
        <name>Mn(2+)</name>
        <dbReference type="ChEBI" id="CHEBI:29035"/>
        <label>2</label>
    </ligand>
</feature>
<feature type="binding site" evidence="1">
    <location>
        <position position="311"/>
    </location>
    <ligand>
        <name>Mn(2+)</name>
        <dbReference type="ChEBI" id="CHEBI:29035"/>
        <label>2</label>
    </ligand>
</feature>
<feature type="binding site" evidence="1">
    <location>
        <position position="347"/>
    </location>
    <ligand>
        <name>Mn(2+)</name>
        <dbReference type="ChEBI" id="CHEBI:29035"/>
        <label>1</label>
    </ligand>
</feature>
<feature type="binding site" evidence="1">
    <location>
        <position position="348"/>
    </location>
    <ligand>
        <name>Mn(2+)</name>
        <dbReference type="ChEBI" id="CHEBI:29035"/>
        <label>1</label>
    </ligand>
</feature>
<feature type="binding site" evidence="1">
    <location>
        <position position="359"/>
    </location>
    <ligand>
        <name>Mn(2+)</name>
        <dbReference type="ChEBI" id="CHEBI:29035"/>
        <label>2</label>
    </ligand>
</feature>